<organism>
    <name type="scientific">Salmonella paratyphi A (strain ATCC 9150 / SARB42)</name>
    <dbReference type="NCBI Taxonomy" id="295319"/>
    <lineage>
        <taxon>Bacteria</taxon>
        <taxon>Pseudomonadati</taxon>
        <taxon>Pseudomonadota</taxon>
        <taxon>Gammaproteobacteria</taxon>
        <taxon>Enterobacterales</taxon>
        <taxon>Enterobacteriaceae</taxon>
        <taxon>Salmonella</taxon>
    </lineage>
</organism>
<sequence>MANFPASLLILNGKSADNQPLREAITLLRDEGIQIHVRVTWEKGDAQRYVDEARRLGVETVIAGGGDGTINEVSTALIQIRDGVAPALGLLPLGTANDFATSAGIPEALDKALKLAIAGNAMEIDMARVNDKTCFINMATGGFGTRITTETPEKLKAALGGVSYLIHGLMRMDTLTPDRCEIRGENFHWQGDALVIGIGNGRQAGGGQQLCPTALVNDGLLQLRIFTGEELLPALFSTLTQSDDNPNIIDGASAWFDIHAPHEITFNLDGEPLSGQEFHIEVLPGALRCRLPPDCPLLR</sequence>
<comment type="function">
    <text evidence="1">Probably phosphorylates lipids; the in vivo substrate is unknown.</text>
</comment>
<comment type="cofactor">
    <cofactor evidence="1">
        <name>Mg(2+)</name>
        <dbReference type="ChEBI" id="CHEBI:18420"/>
    </cofactor>
    <cofactor evidence="1">
        <name>Ca(2+)</name>
        <dbReference type="ChEBI" id="CHEBI:29108"/>
    </cofactor>
    <text evidence="1">Binds 1 Mg(2+) ion per subunit. Ca(2+) may be able to substitute.</text>
</comment>
<comment type="subcellular location">
    <subcellularLocation>
        <location evidence="1">Cytoplasm</location>
    </subcellularLocation>
</comment>
<comment type="similarity">
    <text evidence="1">Belongs to the diacylglycerol/lipid kinase family. YegS lipid kinase subfamily.</text>
</comment>
<name>YEGS_SALPA</name>
<evidence type="ECO:0000255" key="1">
    <source>
        <dbReference type="HAMAP-Rule" id="MF_01377"/>
    </source>
</evidence>
<keyword id="KW-0067">ATP-binding</keyword>
<keyword id="KW-0963">Cytoplasm</keyword>
<keyword id="KW-0418">Kinase</keyword>
<keyword id="KW-0444">Lipid biosynthesis</keyword>
<keyword id="KW-0443">Lipid metabolism</keyword>
<keyword id="KW-0460">Magnesium</keyword>
<keyword id="KW-0479">Metal-binding</keyword>
<keyword id="KW-0547">Nucleotide-binding</keyword>
<keyword id="KW-0594">Phospholipid biosynthesis</keyword>
<keyword id="KW-1208">Phospholipid metabolism</keyword>
<keyword id="KW-0808">Transferase</keyword>
<gene>
    <name evidence="1" type="primary">yegS</name>
    <name type="ordered locus">SPA0712</name>
</gene>
<proteinExistence type="inferred from homology"/>
<dbReference type="EC" id="2.7.1.-" evidence="1"/>
<dbReference type="EMBL" id="CP000026">
    <property type="protein sequence ID" value="AAV76710.1"/>
    <property type="molecule type" value="Genomic_DNA"/>
</dbReference>
<dbReference type="RefSeq" id="WP_001273395.1">
    <property type="nucleotide sequence ID" value="NC_006511.1"/>
</dbReference>
<dbReference type="SMR" id="Q5PLT6"/>
<dbReference type="KEGG" id="spt:SPA0712"/>
<dbReference type="HOGENOM" id="CLU_045532_1_1_6"/>
<dbReference type="Proteomes" id="UP000008185">
    <property type="component" value="Chromosome"/>
</dbReference>
<dbReference type="GO" id="GO:0005737">
    <property type="term" value="C:cytoplasm"/>
    <property type="evidence" value="ECO:0007669"/>
    <property type="project" value="UniProtKB-SubCell"/>
</dbReference>
<dbReference type="GO" id="GO:0005886">
    <property type="term" value="C:plasma membrane"/>
    <property type="evidence" value="ECO:0007669"/>
    <property type="project" value="TreeGrafter"/>
</dbReference>
<dbReference type="GO" id="GO:0005524">
    <property type="term" value="F:ATP binding"/>
    <property type="evidence" value="ECO:0007669"/>
    <property type="project" value="UniProtKB-UniRule"/>
</dbReference>
<dbReference type="GO" id="GO:0001727">
    <property type="term" value="F:lipid kinase activity"/>
    <property type="evidence" value="ECO:0007669"/>
    <property type="project" value="UniProtKB-UniRule"/>
</dbReference>
<dbReference type="GO" id="GO:0000287">
    <property type="term" value="F:magnesium ion binding"/>
    <property type="evidence" value="ECO:0007669"/>
    <property type="project" value="UniProtKB-UniRule"/>
</dbReference>
<dbReference type="GO" id="GO:0008654">
    <property type="term" value="P:phospholipid biosynthetic process"/>
    <property type="evidence" value="ECO:0007669"/>
    <property type="project" value="UniProtKB-UniRule"/>
</dbReference>
<dbReference type="FunFam" id="3.40.50.10330:FF:000008">
    <property type="entry name" value="Probable lipid kinase YegS"/>
    <property type="match status" value="1"/>
</dbReference>
<dbReference type="Gene3D" id="2.60.200.40">
    <property type="match status" value="1"/>
</dbReference>
<dbReference type="Gene3D" id="3.40.50.10330">
    <property type="entry name" value="Probable inorganic polyphosphate/atp-NAD kinase, domain 1"/>
    <property type="match status" value="1"/>
</dbReference>
<dbReference type="HAMAP" id="MF_01377">
    <property type="entry name" value="YegS"/>
    <property type="match status" value="1"/>
</dbReference>
<dbReference type="InterPro" id="IPR017438">
    <property type="entry name" value="ATP-NAD_kinase_N"/>
</dbReference>
<dbReference type="InterPro" id="IPR005218">
    <property type="entry name" value="Diacylglycerol/lipid_kinase"/>
</dbReference>
<dbReference type="InterPro" id="IPR001206">
    <property type="entry name" value="Diacylglycerol_kinase_cat_dom"/>
</dbReference>
<dbReference type="InterPro" id="IPR022433">
    <property type="entry name" value="Lip_kinase_YegS"/>
</dbReference>
<dbReference type="InterPro" id="IPR050187">
    <property type="entry name" value="Lipid_Phosphate_FormReg"/>
</dbReference>
<dbReference type="InterPro" id="IPR016064">
    <property type="entry name" value="NAD/diacylglycerol_kinase_sf"/>
</dbReference>
<dbReference type="InterPro" id="IPR045540">
    <property type="entry name" value="YegS/DAGK_C"/>
</dbReference>
<dbReference type="NCBIfam" id="TIGR03702">
    <property type="entry name" value="lip_kinase_YegS"/>
    <property type="match status" value="1"/>
</dbReference>
<dbReference type="NCBIfam" id="NF009602">
    <property type="entry name" value="PRK13054.1"/>
    <property type="match status" value="1"/>
</dbReference>
<dbReference type="NCBIfam" id="TIGR00147">
    <property type="entry name" value="YegS/Rv2252/BmrU family lipid kinase"/>
    <property type="match status" value="1"/>
</dbReference>
<dbReference type="PANTHER" id="PTHR12358:SF106">
    <property type="entry name" value="LIPID KINASE YEGS"/>
    <property type="match status" value="1"/>
</dbReference>
<dbReference type="PANTHER" id="PTHR12358">
    <property type="entry name" value="SPHINGOSINE KINASE"/>
    <property type="match status" value="1"/>
</dbReference>
<dbReference type="Pfam" id="PF00781">
    <property type="entry name" value="DAGK_cat"/>
    <property type="match status" value="1"/>
</dbReference>
<dbReference type="Pfam" id="PF19279">
    <property type="entry name" value="YegS_C"/>
    <property type="match status" value="1"/>
</dbReference>
<dbReference type="SMART" id="SM00046">
    <property type="entry name" value="DAGKc"/>
    <property type="match status" value="1"/>
</dbReference>
<dbReference type="SUPFAM" id="SSF111331">
    <property type="entry name" value="NAD kinase/diacylglycerol kinase-like"/>
    <property type="match status" value="1"/>
</dbReference>
<dbReference type="PROSITE" id="PS50146">
    <property type="entry name" value="DAGK"/>
    <property type="match status" value="1"/>
</dbReference>
<protein>
    <recommendedName>
        <fullName evidence="1">Probable lipid kinase YegS</fullName>
        <ecNumber evidence="1">2.7.1.-</ecNumber>
    </recommendedName>
</protein>
<reference key="1">
    <citation type="journal article" date="2004" name="Nat. Genet.">
        <title>Comparison of genome degradation in Paratyphi A and Typhi, human-restricted serovars of Salmonella enterica that cause typhoid.</title>
        <authorList>
            <person name="McClelland M."/>
            <person name="Sanderson K.E."/>
            <person name="Clifton S.W."/>
            <person name="Latreille P."/>
            <person name="Porwollik S."/>
            <person name="Sabo A."/>
            <person name="Meyer R."/>
            <person name="Bieri T."/>
            <person name="Ozersky P."/>
            <person name="McLellan M."/>
            <person name="Harkins C.R."/>
            <person name="Wang C."/>
            <person name="Nguyen C."/>
            <person name="Berghoff A."/>
            <person name="Elliott G."/>
            <person name="Kohlberg S."/>
            <person name="Strong C."/>
            <person name="Du F."/>
            <person name="Carter J."/>
            <person name="Kremizki C."/>
            <person name="Layman D."/>
            <person name="Leonard S."/>
            <person name="Sun H."/>
            <person name="Fulton L."/>
            <person name="Nash W."/>
            <person name="Miner T."/>
            <person name="Minx P."/>
            <person name="Delehaunty K."/>
            <person name="Fronick C."/>
            <person name="Magrini V."/>
            <person name="Nhan M."/>
            <person name="Warren W."/>
            <person name="Florea L."/>
            <person name="Spieth J."/>
            <person name="Wilson R.K."/>
        </authorList>
    </citation>
    <scope>NUCLEOTIDE SEQUENCE [LARGE SCALE GENOMIC DNA]</scope>
    <source>
        <strain>ATCC 9150 / SARB42</strain>
    </source>
</reference>
<accession>Q5PLT6</accession>
<feature type="chain" id="PRO_0000292156" description="Probable lipid kinase YegS">
    <location>
        <begin position="1"/>
        <end position="299"/>
    </location>
</feature>
<feature type="domain" description="DAGKc" evidence="1">
    <location>
        <begin position="2"/>
        <end position="133"/>
    </location>
</feature>
<feature type="active site" description="Proton acceptor" evidence="1">
    <location>
        <position position="271"/>
    </location>
</feature>
<feature type="binding site" evidence="1">
    <location>
        <position position="40"/>
    </location>
    <ligand>
        <name>ATP</name>
        <dbReference type="ChEBI" id="CHEBI:30616"/>
    </ligand>
</feature>
<feature type="binding site" evidence="1">
    <location>
        <begin position="66"/>
        <end position="72"/>
    </location>
    <ligand>
        <name>ATP</name>
        <dbReference type="ChEBI" id="CHEBI:30616"/>
    </ligand>
</feature>
<feature type="binding site" evidence="1">
    <location>
        <position position="95"/>
    </location>
    <ligand>
        <name>ATP</name>
        <dbReference type="ChEBI" id="CHEBI:30616"/>
    </ligand>
</feature>
<feature type="binding site" evidence="1">
    <location>
        <position position="215"/>
    </location>
    <ligand>
        <name>Mg(2+)</name>
        <dbReference type="ChEBI" id="CHEBI:18420"/>
    </ligand>
</feature>
<feature type="binding site" evidence="1">
    <location>
        <position position="218"/>
    </location>
    <ligand>
        <name>Mg(2+)</name>
        <dbReference type="ChEBI" id="CHEBI:18420"/>
    </ligand>
</feature>
<feature type="binding site" evidence="1">
    <location>
        <position position="220"/>
    </location>
    <ligand>
        <name>Mg(2+)</name>
        <dbReference type="ChEBI" id="CHEBI:18420"/>
    </ligand>
</feature>